<proteinExistence type="evidence at transcript level"/>
<comment type="function">
    <text evidence="1 2">Regulatory subunit of the ATP-dependent BRF-1 and BRF-5 ISWI chromatin remodeling complexes, which form ordered nucleosome arrays on chromatin and facilitate access to DNA during DNA-templated processes such as DNA replication, transcription, and repair (By similarity). Both complexes regulate the spacing of nucleosomes along the chromatin and have the ability to slide mononucleosomes to the center of a DNA template (By similarity). The BRF-1 ISWI chromatin remodeling complex has a lower ATP hydrolysis rate than the BRF-5 ISWI chromatin remodeling complex (By similarity). Chromatin reader protein (By similarity). Represses the expression of mitochondrial function-related genes, perhaps by transcriptional regulation (By similarity).</text>
</comment>
<comment type="subcellular location">
    <subcellularLocation>
        <location evidence="5">Nucleus</location>
    </subcellularLocation>
</comment>
<comment type="similarity">
    <text evidence="9">Belongs to the WAL family.</text>
</comment>
<keyword id="KW-0103">Bromodomain</keyword>
<keyword id="KW-0175">Coiled coil</keyword>
<keyword id="KW-0238">DNA-binding</keyword>
<keyword id="KW-0479">Metal-binding</keyword>
<keyword id="KW-0539">Nucleus</keyword>
<keyword id="KW-1185">Reference proteome</keyword>
<keyword id="KW-0804">Transcription</keyword>
<keyword id="KW-0805">Transcription regulation</keyword>
<keyword id="KW-0862">Zinc</keyword>
<keyword id="KW-0863">Zinc-finger</keyword>
<sequence length="2130" mass="236141">MESGERLTSSSVSSTAAASSPVSSTPSVASAVSKSGLTTGAASLSSTINTGEWWRTADSHSRSGAAFFPPLLGPPLLGISPLFAPPAQNHDSTPFHPRTTGKNNRGSLEKGINGSLNGNSTTAASAISTSVLSTSIATSAGQVKVVTSGAGGRKYNQEQNKVQLLDTRADKIKDKKPRKKAVESSSNSDSDSGSSSDTSSEGISSSDSDDLEEDEEEEEDQSAEESEDDESDSENEAHHENKNKVLMHSGVKDMKTDGQKAHEKSQEKRTHQQIPLVSDSQTHSSFQSQQKQPQVLSQQLPFIFQSSQAKEESVNKHTSVIQSTGLVPNVKPLSLVHQTKKEAYLKIIVPPPDLLKAGNKNTSEESIPLISDVRSKREQYKQTFPAAQLKKQESSKNLKKVIASLSSSKPTSCSPAHQKLTSLENNHSNPFLTNALLGNHQPNGVIQSVIQEVPLALTTKQKSQTKINESVAIASSTPFSLPVNLSACGKKTTGNRTLVVPSTSPVLPGSGKDKPVSNNAVNAVKTQHCLPSAKLVVEQFRGVDSDAPSSKESDDSNDDDDDDEDEDEDDEDDDSDDSQSESDSNSESDTDGSEDEDDEDDKDQDESDTDTEGEKTPLKLKKTGSSIKSSSIGPVAHSTPLNLQVAKTPSSAPSALCPETQPAVFLGTTPSTLTPSSHCGISKRRRVTDERELRVPLEYGWQRETRIRNFGGRLQGEVAYFAPCGKKLRQYPEVVKGVQWCLLKEEEVVPCIRAMEGRRGRPPNPDRQHSREESRMRRRKGRPPNVGSTEFLDSTDAKLLRKLQAQEIARQAAQIKLLRKLQKQEQARAAKEAKKQQAIMAAEEKRKQKEQIKIMKQQEKIKRIQQIRMEKELRAQQILEAKKKKKEEAANAKLLEAEKRIKEKEMRRQQAVLLKHQELERHRLDMERERRRQHMMLMKAMEARKKAEEKERLKQEKRDEKRLNKERKLEQRRLELEMAKELKKPNEDMCLADQKALPELPRIPGLVLSGSTFSDCLMIVQFLRNFGKVLGFDVNTDVPSLSTLQEGLLNIGDSRGEVQDLLVKLVTAAVCDPGLVTGYKAKTILGEHLLNVGINRDNVSEILQIFMEAHCGQTELTESLKTKAFQAHTPAQKAAVLAFLVNELACSKSVVSEIDKNIDYMSNLRRDKWMVEGKLRNLRIIHAKKTGKRDATGGGEVGEEPHSLETPTPGRKRRRKGGDSDYDDDDDDDSDDQADEDDEDEEDKEDKKGKKAEVCEDEDDGDQTVSVEELEKQIEKLTKQQSQYRKKLFEASHCLRSMMFGQDRYRRRYWILPQCGGIFVEGMESGEGLEEIAKEKEKLKKVESIHIKEEVFEISEEKISCLNTTRCEQKEDLKEKDNTNLFLQKPGSFSKLSKLLEVAKMPPECDVMPQKPNGGAANGCTPSYQNTSQNSLCSLQPSVSQSSSEKSDSSNLFSPTASGTGKFYSSPLIPSDQLLKTLTEKNRQWFSLLPRVPCDDMSVTHVDTPATTSLTPQSHPPSKSPSPVPSPLLGSTSAQSPMGLSPFAMPPLQQMKPGLPVMGLQFCGWPTGVLTSNVQFSSPLPTLGSGLGLSEGNGNSFLTSSVPTSKSESPALQTEKVAFATCTAVEVAKPVDHPNPKPIPEEMQYGWWRITDPEDLKSLHKVLHLRGIREKALQKQIQKHMDYITLACIKNKDVAIIDINENEDNQVTRDVVENWSVEEQAMEVDLAILQQVEDLERRVASASLQVKGWLCPEPASEREDLVYHEHKSIIRLHKKHDGDSAGGGEGSTSSLERKNDNPLDIAVTRLADLERNIERRYLKSPLSTTIQIKLDNVGTVTVPAPAPSISGDGDGTEEDIAPGLRVWRKALSEARSAAQVALCIQQLQKSIAWEKSIMKVYCQICRKGDNEELLLLCDGCDKGCHTYCHRPKITTIPDGDWFCPACIAKASGQTLKLKKLQIKGKKSNEQKRGRKLPGDTEDEDSATTSTSLKRGKTEPKKRKMDESVSVSQGKQENFTAIKKPKRDDSKDLAICSMILSELETHEDAWPFLLPVNLKLVPGYKKVIKKPMDFSTIRDKLTSGQYPNVEAFSLDVRLVFDNCETFNEDDSDIGRAGHNMRKYFEKKWTEIFKLS</sequence>
<accession>Q9DE13</accession>
<organism>
    <name type="scientific">Gallus gallus</name>
    <name type="common">Chicken</name>
    <dbReference type="NCBI Taxonomy" id="9031"/>
    <lineage>
        <taxon>Eukaryota</taxon>
        <taxon>Metazoa</taxon>
        <taxon>Chordata</taxon>
        <taxon>Craniata</taxon>
        <taxon>Vertebrata</taxon>
        <taxon>Euteleostomi</taxon>
        <taxon>Archelosauria</taxon>
        <taxon>Archosauria</taxon>
        <taxon>Dinosauria</taxon>
        <taxon>Saurischia</taxon>
        <taxon>Theropoda</taxon>
        <taxon>Coelurosauria</taxon>
        <taxon>Aves</taxon>
        <taxon>Neognathae</taxon>
        <taxon>Galloanserae</taxon>
        <taxon>Galliformes</taxon>
        <taxon>Phasianidae</taxon>
        <taxon>Phasianinae</taxon>
        <taxon>Gallus</taxon>
    </lineage>
</organism>
<name>BAZ2B_CHICK</name>
<protein>
    <recommendedName>
        <fullName>Bromodomain adjacent to zinc finger domain protein 2B</fullName>
    </recommendedName>
    <alternativeName>
        <fullName>Extracellular matrix protein F22</fullName>
    </alternativeName>
</protein>
<evidence type="ECO:0000250" key="1">
    <source>
        <dbReference type="UniProtKB" id="A2AUY4"/>
    </source>
</evidence>
<evidence type="ECO:0000250" key="2">
    <source>
        <dbReference type="UniProtKB" id="Q9UIF8"/>
    </source>
</evidence>
<evidence type="ECO:0000255" key="3"/>
<evidence type="ECO:0000255" key="4">
    <source>
        <dbReference type="PROSITE-ProRule" id="PRU00035"/>
    </source>
</evidence>
<evidence type="ECO:0000255" key="5">
    <source>
        <dbReference type="PROSITE-ProRule" id="PRU00063"/>
    </source>
</evidence>
<evidence type="ECO:0000255" key="6">
    <source>
        <dbReference type="PROSITE-ProRule" id="PRU00146"/>
    </source>
</evidence>
<evidence type="ECO:0000255" key="7">
    <source>
        <dbReference type="PROSITE-ProRule" id="PRU00338"/>
    </source>
</evidence>
<evidence type="ECO:0000256" key="8">
    <source>
        <dbReference type="SAM" id="MobiDB-lite"/>
    </source>
</evidence>
<evidence type="ECO:0000305" key="9"/>
<gene>
    <name type="primary">BAZ2B</name>
</gene>
<reference key="1">
    <citation type="submission" date="2000-01" db="EMBL/GenBank/DDBJ databases">
        <title>Cloning of a new extracellular matrix protein expressed in retina.</title>
        <authorList>
            <person name="Yoon H."/>
            <person name="Philp N.J."/>
        </authorList>
    </citation>
    <scope>NUCLEOTIDE SEQUENCE [MRNA]</scope>
</reference>
<dbReference type="EMBL" id="AF224275">
    <property type="protein sequence ID" value="AAG36791.1"/>
    <property type="molecule type" value="mRNA"/>
</dbReference>
<dbReference type="RefSeq" id="NP_990008.1">
    <property type="nucleotide sequence ID" value="NM_204677.1"/>
</dbReference>
<dbReference type="SMR" id="Q9DE13"/>
<dbReference type="FunCoup" id="Q9DE13">
    <property type="interactions" value="1370"/>
</dbReference>
<dbReference type="STRING" id="9031.ENSGALP00000053662"/>
<dbReference type="GlyGen" id="Q9DE13">
    <property type="glycosylation" value="2 sites"/>
</dbReference>
<dbReference type="PaxDb" id="9031-ENSGALP00000020513"/>
<dbReference type="KEGG" id="gga:395400"/>
<dbReference type="VEuPathDB" id="HostDB:geneid_395400"/>
<dbReference type="eggNOG" id="KOG1245">
    <property type="taxonomic scope" value="Eukaryota"/>
</dbReference>
<dbReference type="InParanoid" id="Q9DE13"/>
<dbReference type="OrthoDB" id="21449at2759"/>
<dbReference type="PhylomeDB" id="Q9DE13"/>
<dbReference type="PRO" id="PR:Q9DE13"/>
<dbReference type="Proteomes" id="UP000000539">
    <property type="component" value="Unassembled WGS sequence"/>
</dbReference>
<dbReference type="GO" id="GO:0000785">
    <property type="term" value="C:chromatin"/>
    <property type="evidence" value="ECO:0000318"/>
    <property type="project" value="GO_Central"/>
</dbReference>
<dbReference type="GO" id="GO:0005634">
    <property type="term" value="C:nucleus"/>
    <property type="evidence" value="ECO:0007669"/>
    <property type="project" value="UniProtKB-SubCell"/>
</dbReference>
<dbReference type="GO" id="GO:0003677">
    <property type="term" value="F:DNA binding"/>
    <property type="evidence" value="ECO:0007669"/>
    <property type="project" value="UniProtKB-KW"/>
</dbReference>
<dbReference type="GO" id="GO:0008270">
    <property type="term" value="F:zinc ion binding"/>
    <property type="evidence" value="ECO:0007669"/>
    <property type="project" value="UniProtKB-KW"/>
</dbReference>
<dbReference type="CDD" id="cd05503">
    <property type="entry name" value="Bromo_BAZ2A_B_like"/>
    <property type="match status" value="1"/>
</dbReference>
<dbReference type="CDD" id="cd01397">
    <property type="entry name" value="HAT_MBD"/>
    <property type="match status" value="1"/>
</dbReference>
<dbReference type="CDD" id="cd15630">
    <property type="entry name" value="PHD_BAZ2B"/>
    <property type="match status" value="1"/>
</dbReference>
<dbReference type="FunFam" id="3.30.40.10:FF:000199">
    <property type="entry name" value="Bromodomain adjacent to zinc finger domain 2B"/>
    <property type="match status" value="1"/>
</dbReference>
<dbReference type="FunFam" id="1.20.920.10:FF:000023">
    <property type="entry name" value="Bromodomain adjacent to zinc finger domain protein 2B"/>
    <property type="match status" value="1"/>
</dbReference>
<dbReference type="Gene3D" id="1.20.920.10">
    <property type="entry name" value="Bromodomain-like"/>
    <property type="match status" value="1"/>
</dbReference>
<dbReference type="Gene3D" id="3.30.890.10">
    <property type="entry name" value="Methyl-cpg-binding Protein 2, Chain A"/>
    <property type="match status" value="1"/>
</dbReference>
<dbReference type="Gene3D" id="3.30.40.10">
    <property type="entry name" value="Zinc/RING finger domain, C3HC4 (zinc finger)"/>
    <property type="match status" value="1"/>
</dbReference>
<dbReference type="InterPro" id="IPR016024">
    <property type="entry name" value="ARM-type_fold"/>
</dbReference>
<dbReference type="InterPro" id="IPR037374">
    <property type="entry name" value="BAZ2A/B_Bromo"/>
</dbReference>
<dbReference type="InterPro" id="IPR001487">
    <property type="entry name" value="Bromodomain"/>
</dbReference>
<dbReference type="InterPro" id="IPR036427">
    <property type="entry name" value="Bromodomain-like_sf"/>
</dbReference>
<dbReference type="InterPro" id="IPR018359">
    <property type="entry name" value="Bromodomain_CS"/>
</dbReference>
<dbReference type="InterPro" id="IPR018501">
    <property type="entry name" value="DDT_dom"/>
</dbReference>
<dbReference type="InterPro" id="IPR016177">
    <property type="entry name" value="DNA-bd_dom_sf"/>
</dbReference>
<dbReference type="InterPro" id="IPR001739">
    <property type="entry name" value="Methyl_CpG_DNA-bd"/>
</dbReference>
<dbReference type="InterPro" id="IPR028941">
    <property type="entry name" value="WHIM2_dom"/>
</dbReference>
<dbReference type="InterPro" id="IPR011011">
    <property type="entry name" value="Znf_FYVE_PHD"/>
</dbReference>
<dbReference type="InterPro" id="IPR001965">
    <property type="entry name" value="Znf_PHD"/>
</dbReference>
<dbReference type="InterPro" id="IPR019787">
    <property type="entry name" value="Znf_PHD-finger"/>
</dbReference>
<dbReference type="InterPro" id="IPR013083">
    <property type="entry name" value="Znf_RING/FYVE/PHD"/>
</dbReference>
<dbReference type="PANTHER" id="PTHR45915:SF2">
    <property type="entry name" value="TOUTATIS, ISOFORM E"/>
    <property type="match status" value="1"/>
</dbReference>
<dbReference type="PANTHER" id="PTHR45915">
    <property type="entry name" value="TRANSCRIPTION INTERMEDIARY FACTOR"/>
    <property type="match status" value="1"/>
</dbReference>
<dbReference type="Pfam" id="PF00439">
    <property type="entry name" value="Bromodomain"/>
    <property type="match status" value="1"/>
</dbReference>
<dbReference type="Pfam" id="PF02791">
    <property type="entry name" value="DDT"/>
    <property type="match status" value="1"/>
</dbReference>
<dbReference type="Pfam" id="PF01429">
    <property type="entry name" value="MBD"/>
    <property type="match status" value="1"/>
</dbReference>
<dbReference type="Pfam" id="PF00628">
    <property type="entry name" value="PHD"/>
    <property type="match status" value="1"/>
</dbReference>
<dbReference type="Pfam" id="PF15613">
    <property type="entry name" value="WSD"/>
    <property type="match status" value="1"/>
</dbReference>
<dbReference type="PRINTS" id="PR00503">
    <property type="entry name" value="BROMODOMAIN"/>
</dbReference>
<dbReference type="SMART" id="SM00297">
    <property type="entry name" value="BROMO"/>
    <property type="match status" value="1"/>
</dbReference>
<dbReference type="SMART" id="SM00571">
    <property type="entry name" value="DDT"/>
    <property type="match status" value="1"/>
</dbReference>
<dbReference type="SMART" id="SM00391">
    <property type="entry name" value="MBD"/>
    <property type="match status" value="1"/>
</dbReference>
<dbReference type="SMART" id="SM00249">
    <property type="entry name" value="PHD"/>
    <property type="match status" value="1"/>
</dbReference>
<dbReference type="SUPFAM" id="SSF48371">
    <property type="entry name" value="ARM repeat"/>
    <property type="match status" value="1"/>
</dbReference>
<dbReference type="SUPFAM" id="SSF47370">
    <property type="entry name" value="Bromodomain"/>
    <property type="match status" value="1"/>
</dbReference>
<dbReference type="SUPFAM" id="SSF54171">
    <property type="entry name" value="DNA-binding domain"/>
    <property type="match status" value="1"/>
</dbReference>
<dbReference type="SUPFAM" id="SSF57903">
    <property type="entry name" value="FYVE/PHD zinc finger"/>
    <property type="match status" value="1"/>
</dbReference>
<dbReference type="PROSITE" id="PS00633">
    <property type="entry name" value="BROMODOMAIN_1"/>
    <property type="match status" value="1"/>
</dbReference>
<dbReference type="PROSITE" id="PS50014">
    <property type="entry name" value="BROMODOMAIN_2"/>
    <property type="match status" value="1"/>
</dbReference>
<dbReference type="PROSITE" id="PS50827">
    <property type="entry name" value="DDT"/>
    <property type="match status" value="1"/>
</dbReference>
<dbReference type="PROSITE" id="PS50982">
    <property type="entry name" value="MBD"/>
    <property type="match status" value="1"/>
</dbReference>
<dbReference type="PROSITE" id="PS50016">
    <property type="entry name" value="ZF_PHD_2"/>
    <property type="match status" value="1"/>
</dbReference>
<feature type="chain" id="PRO_0000211175" description="Bromodomain adjacent to zinc finger domain protein 2B">
    <location>
        <begin position="1"/>
        <end position="2130"/>
    </location>
</feature>
<feature type="domain" description="MBD" evidence="7">
    <location>
        <begin position="687"/>
        <end position="762"/>
    </location>
</feature>
<feature type="domain" description="DDT" evidence="5">
    <location>
        <begin position="1010"/>
        <end position="1075"/>
    </location>
</feature>
<feature type="domain" description="Bromo" evidence="4">
    <location>
        <begin position="2022"/>
        <end position="2126"/>
    </location>
</feature>
<feature type="zinc finger region" description="PHD-type" evidence="6">
    <location>
        <begin position="1895"/>
        <end position="1945"/>
    </location>
</feature>
<feature type="region of interest" description="Disordered" evidence="8">
    <location>
        <begin position="1"/>
        <end position="42"/>
    </location>
</feature>
<feature type="region of interest" description="Disordered" evidence="8">
    <location>
        <begin position="82"/>
        <end position="118"/>
    </location>
</feature>
<feature type="region of interest" description="Disordered" evidence="8">
    <location>
        <begin position="151"/>
        <end position="293"/>
    </location>
</feature>
<feature type="region of interest" description="Disordered" evidence="8">
    <location>
        <begin position="491"/>
        <end position="518"/>
    </location>
</feature>
<feature type="region of interest" description="Disordered" evidence="8">
    <location>
        <begin position="543"/>
        <end position="633"/>
    </location>
</feature>
<feature type="region of interest" description="Disordered" evidence="8">
    <location>
        <begin position="756"/>
        <end position="790"/>
    </location>
</feature>
<feature type="region of interest" description="Disordered" evidence="8">
    <location>
        <begin position="944"/>
        <end position="966"/>
    </location>
</feature>
<feature type="region of interest" description="Disordered" evidence="8">
    <location>
        <begin position="1186"/>
        <end position="1265"/>
    </location>
</feature>
<feature type="region of interest" description="Disordered" evidence="8">
    <location>
        <begin position="1431"/>
        <end position="1454"/>
    </location>
</feature>
<feature type="region of interest" description="Disordered" evidence="8">
    <location>
        <begin position="1499"/>
        <end position="1545"/>
    </location>
</feature>
<feature type="region of interest" description="Disordered" evidence="8">
    <location>
        <begin position="1773"/>
        <end position="1795"/>
    </location>
</feature>
<feature type="region of interest" description="Disordered" evidence="8">
    <location>
        <begin position="1957"/>
        <end position="2019"/>
    </location>
</feature>
<feature type="coiled-coil region" evidence="3">
    <location>
        <begin position="797"/>
        <end position="984"/>
    </location>
</feature>
<feature type="compositionally biased region" description="Low complexity" evidence="8">
    <location>
        <begin position="8"/>
        <end position="33"/>
    </location>
</feature>
<feature type="compositionally biased region" description="Low complexity" evidence="8">
    <location>
        <begin position="183"/>
        <end position="206"/>
    </location>
</feature>
<feature type="compositionally biased region" description="Acidic residues" evidence="8">
    <location>
        <begin position="207"/>
        <end position="234"/>
    </location>
</feature>
<feature type="compositionally biased region" description="Basic and acidic residues" evidence="8">
    <location>
        <begin position="250"/>
        <end position="270"/>
    </location>
</feature>
<feature type="compositionally biased region" description="Polar residues" evidence="8">
    <location>
        <begin position="272"/>
        <end position="283"/>
    </location>
</feature>
<feature type="compositionally biased region" description="Low complexity" evidence="8">
    <location>
        <begin position="284"/>
        <end position="293"/>
    </location>
</feature>
<feature type="compositionally biased region" description="Polar residues" evidence="8">
    <location>
        <begin position="492"/>
        <end position="505"/>
    </location>
</feature>
<feature type="compositionally biased region" description="Basic and acidic residues" evidence="8">
    <location>
        <begin position="543"/>
        <end position="554"/>
    </location>
</feature>
<feature type="compositionally biased region" description="Acidic residues" evidence="8">
    <location>
        <begin position="555"/>
        <end position="611"/>
    </location>
</feature>
<feature type="compositionally biased region" description="Low complexity" evidence="8">
    <location>
        <begin position="623"/>
        <end position="633"/>
    </location>
</feature>
<feature type="compositionally biased region" description="Basic and acidic residues" evidence="8">
    <location>
        <begin position="756"/>
        <end position="775"/>
    </location>
</feature>
<feature type="compositionally biased region" description="Acidic residues" evidence="8">
    <location>
        <begin position="1220"/>
        <end position="1244"/>
    </location>
</feature>
<feature type="compositionally biased region" description="Basic and acidic residues" evidence="8">
    <location>
        <begin position="1245"/>
        <end position="1254"/>
    </location>
</feature>
<feature type="compositionally biased region" description="Pro residues" evidence="8">
    <location>
        <begin position="1514"/>
        <end position="1526"/>
    </location>
</feature>
<feature type="compositionally biased region" description="Basic and acidic residues" evidence="8">
    <location>
        <begin position="1991"/>
        <end position="2002"/>
    </location>
</feature>
<feature type="compositionally biased region" description="Polar residues" evidence="8">
    <location>
        <begin position="2004"/>
        <end position="2014"/>
    </location>
</feature>